<sequence length="231" mass="24203">MTQDELKRLVGEAAARYVTENVPQGAVIGVGTGSTANCFIDALAAVKDRYRGAVSSSVATTERLKSHGIKVFDLNEIESLQVYVDGADEIDGSGAMIKGGGGALTREKIVASVAETFVCIADASKRVAVLGQFPLPVEVVPMARTAIGRRLAALGGVPVLRVKQDGAPYVTDNGNEILDVKGLRIDDPRALEAAINGWPGVVTVGLFAQRGADLCLLGTERGVETLRYAAH</sequence>
<reference key="1">
    <citation type="journal article" date="2010" name="Genome Biol. Evol.">
        <title>Continuing evolution of Burkholderia mallei through genome reduction and large-scale rearrangements.</title>
        <authorList>
            <person name="Losada L."/>
            <person name="Ronning C.M."/>
            <person name="DeShazer D."/>
            <person name="Woods D."/>
            <person name="Fedorova N."/>
            <person name="Kim H.S."/>
            <person name="Shabalina S.A."/>
            <person name="Pearson T.R."/>
            <person name="Brinkac L."/>
            <person name="Tan P."/>
            <person name="Nandi T."/>
            <person name="Crabtree J."/>
            <person name="Badger J."/>
            <person name="Beckstrom-Sternberg S."/>
            <person name="Saqib M."/>
            <person name="Schutzer S.E."/>
            <person name="Keim P."/>
            <person name="Nierman W.C."/>
        </authorList>
    </citation>
    <scope>NUCLEOTIDE SEQUENCE [LARGE SCALE GENOMIC DNA]</scope>
    <source>
        <strain>1106a</strain>
    </source>
</reference>
<comment type="function">
    <text evidence="1">Catalyzes the reversible conversion of ribose-5-phosphate to ribulose 5-phosphate.</text>
</comment>
<comment type="catalytic activity">
    <reaction evidence="1">
        <text>aldehydo-D-ribose 5-phosphate = D-ribulose 5-phosphate</text>
        <dbReference type="Rhea" id="RHEA:14657"/>
        <dbReference type="ChEBI" id="CHEBI:58121"/>
        <dbReference type="ChEBI" id="CHEBI:58273"/>
        <dbReference type="EC" id="5.3.1.6"/>
    </reaction>
</comment>
<comment type="pathway">
    <text evidence="1">Carbohydrate degradation; pentose phosphate pathway; D-ribose 5-phosphate from D-ribulose 5-phosphate (non-oxidative stage): step 1/1.</text>
</comment>
<comment type="subunit">
    <text evidence="1">Homodimer.</text>
</comment>
<comment type="similarity">
    <text evidence="1">Belongs to the ribose 5-phosphate isomerase family.</text>
</comment>
<protein>
    <recommendedName>
        <fullName evidence="1">Ribose-5-phosphate isomerase A</fullName>
        <ecNumber evidence="1">5.3.1.6</ecNumber>
    </recommendedName>
    <alternativeName>
        <fullName evidence="1">Phosphoriboisomerase A</fullName>
        <shortName evidence="1">PRI</shortName>
    </alternativeName>
</protein>
<name>RPIA_BURP0</name>
<evidence type="ECO:0000255" key="1">
    <source>
        <dbReference type="HAMAP-Rule" id="MF_00170"/>
    </source>
</evidence>
<dbReference type="EC" id="5.3.1.6" evidence="1"/>
<dbReference type="EMBL" id="CP000572">
    <property type="protein sequence ID" value="ABN91510.1"/>
    <property type="molecule type" value="Genomic_DNA"/>
</dbReference>
<dbReference type="RefSeq" id="WP_004192848.1">
    <property type="nucleotide sequence ID" value="NC_009076.1"/>
</dbReference>
<dbReference type="SMR" id="A3NUR6"/>
<dbReference type="GeneID" id="93060124"/>
<dbReference type="KEGG" id="bpl:BURPS1106A_1820"/>
<dbReference type="HOGENOM" id="CLU_056590_1_1_4"/>
<dbReference type="UniPathway" id="UPA00115">
    <property type="reaction ID" value="UER00412"/>
</dbReference>
<dbReference type="Proteomes" id="UP000006738">
    <property type="component" value="Chromosome I"/>
</dbReference>
<dbReference type="GO" id="GO:0005829">
    <property type="term" value="C:cytosol"/>
    <property type="evidence" value="ECO:0007669"/>
    <property type="project" value="TreeGrafter"/>
</dbReference>
<dbReference type="GO" id="GO:0004751">
    <property type="term" value="F:ribose-5-phosphate isomerase activity"/>
    <property type="evidence" value="ECO:0007669"/>
    <property type="project" value="UniProtKB-UniRule"/>
</dbReference>
<dbReference type="GO" id="GO:0006014">
    <property type="term" value="P:D-ribose metabolic process"/>
    <property type="evidence" value="ECO:0007669"/>
    <property type="project" value="TreeGrafter"/>
</dbReference>
<dbReference type="GO" id="GO:0009052">
    <property type="term" value="P:pentose-phosphate shunt, non-oxidative branch"/>
    <property type="evidence" value="ECO:0007669"/>
    <property type="project" value="UniProtKB-UniRule"/>
</dbReference>
<dbReference type="CDD" id="cd01398">
    <property type="entry name" value="RPI_A"/>
    <property type="match status" value="1"/>
</dbReference>
<dbReference type="FunFam" id="3.40.50.1360:FF:000001">
    <property type="entry name" value="Ribose-5-phosphate isomerase A"/>
    <property type="match status" value="1"/>
</dbReference>
<dbReference type="Gene3D" id="3.30.70.260">
    <property type="match status" value="1"/>
</dbReference>
<dbReference type="Gene3D" id="3.40.50.1360">
    <property type="match status" value="1"/>
</dbReference>
<dbReference type="HAMAP" id="MF_00170">
    <property type="entry name" value="Rib_5P_isom_A"/>
    <property type="match status" value="1"/>
</dbReference>
<dbReference type="InterPro" id="IPR037171">
    <property type="entry name" value="NagB/RpiA_transferase-like"/>
</dbReference>
<dbReference type="InterPro" id="IPR020672">
    <property type="entry name" value="Ribose5P_isomerase_typA_subgr"/>
</dbReference>
<dbReference type="InterPro" id="IPR004788">
    <property type="entry name" value="Ribose5P_isomerase_type_A"/>
</dbReference>
<dbReference type="NCBIfam" id="NF001924">
    <property type="entry name" value="PRK00702.1"/>
    <property type="match status" value="1"/>
</dbReference>
<dbReference type="NCBIfam" id="TIGR00021">
    <property type="entry name" value="rpiA"/>
    <property type="match status" value="1"/>
</dbReference>
<dbReference type="PANTHER" id="PTHR11934">
    <property type="entry name" value="RIBOSE-5-PHOSPHATE ISOMERASE"/>
    <property type="match status" value="1"/>
</dbReference>
<dbReference type="PANTHER" id="PTHR11934:SF0">
    <property type="entry name" value="RIBOSE-5-PHOSPHATE ISOMERASE"/>
    <property type="match status" value="1"/>
</dbReference>
<dbReference type="Pfam" id="PF06026">
    <property type="entry name" value="Rib_5-P_isom_A"/>
    <property type="match status" value="1"/>
</dbReference>
<dbReference type="SUPFAM" id="SSF75445">
    <property type="entry name" value="D-ribose-5-phosphate isomerase (RpiA), lid domain"/>
    <property type="match status" value="1"/>
</dbReference>
<dbReference type="SUPFAM" id="SSF100950">
    <property type="entry name" value="NagB/RpiA/CoA transferase-like"/>
    <property type="match status" value="1"/>
</dbReference>
<feature type="chain" id="PRO_1000016912" description="Ribose-5-phosphate isomerase A">
    <location>
        <begin position="1"/>
        <end position="231"/>
    </location>
</feature>
<feature type="active site" description="Proton acceptor" evidence="1">
    <location>
        <position position="107"/>
    </location>
</feature>
<feature type="binding site" evidence="1">
    <location>
        <begin position="32"/>
        <end position="35"/>
    </location>
    <ligand>
        <name>substrate</name>
    </ligand>
</feature>
<feature type="binding site" evidence="1">
    <location>
        <begin position="85"/>
        <end position="88"/>
    </location>
    <ligand>
        <name>substrate</name>
    </ligand>
</feature>
<feature type="binding site" evidence="1">
    <location>
        <begin position="98"/>
        <end position="101"/>
    </location>
    <ligand>
        <name>substrate</name>
    </ligand>
</feature>
<feature type="binding site" evidence="1">
    <location>
        <position position="125"/>
    </location>
    <ligand>
        <name>substrate</name>
    </ligand>
</feature>
<organism>
    <name type="scientific">Burkholderia pseudomallei (strain 1106a)</name>
    <dbReference type="NCBI Taxonomy" id="357348"/>
    <lineage>
        <taxon>Bacteria</taxon>
        <taxon>Pseudomonadati</taxon>
        <taxon>Pseudomonadota</taxon>
        <taxon>Betaproteobacteria</taxon>
        <taxon>Burkholderiales</taxon>
        <taxon>Burkholderiaceae</taxon>
        <taxon>Burkholderia</taxon>
        <taxon>pseudomallei group</taxon>
    </lineage>
</organism>
<gene>
    <name evidence="1" type="primary">rpiA</name>
    <name type="ordered locus">BURPS1106A_1820</name>
</gene>
<keyword id="KW-0413">Isomerase</keyword>
<proteinExistence type="inferred from homology"/>
<accession>A3NUR6</accession>